<reference key="1">
    <citation type="journal article" date="2001" name="Plant Physiol.">
        <title>Aquaporins constitute a large and highly divergent protein family in maize.</title>
        <authorList>
            <person name="Chaumont F."/>
            <person name="Barrieu F."/>
            <person name="Wojcik E."/>
            <person name="Chrispeels M.J."/>
            <person name="Jung R."/>
        </authorList>
    </citation>
    <scope>NUCLEOTIDE SEQUENCE [MRNA]</scope>
    <scope>GENE FAMILY</scope>
    <scope>NOMENCLATURE</scope>
    <source>
        <strain>cv. B73</strain>
    </source>
</reference>
<organism>
    <name type="scientific">Zea mays</name>
    <name type="common">Maize</name>
    <dbReference type="NCBI Taxonomy" id="4577"/>
    <lineage>
        <taxon>Eukaryota</taxon>
        <taxon>Viridiplantae</taxon>
        <taxon>Streptophyta</taxon>
        <taxon>Embryophyta</taxon>
        <taxon>Tracheophyta</taxon>
        <taxon>Spermatophyta</taxon>
        <taxon>Magnoliopsida</taxon>
        <taxon>Liliopsida</taxon>
        <taxon>Poales</taxon>
        <taxon>Poaceae</taxon>
        <taxon>PACMAD clade</taxon>
        <taxon>Panicoideae</taxon>
        <taxon>Andropogonodae</taxon>
        <taxon>Andropogoneae</taxon>
        <taxon>Tripsacinae</taxon>
        <taxon>Zea</taxon>
    </lineage>
</organism>
<protein>
    <recommendedName>
        <fullName>Aquaporin TIP4-4</fullName>
    </recommendedName>
    <alternativeName>
        <fullName>Tonoplast intrinsic protein 4-4</fullName>
    </alternativeName>
    <alternativeName>
        <fullName>ZmTIP4-4</fullName>
    </alternativeName>
    <alternativeName>
        <fullName>ZmTIP4;4</fullName>
    </alternativeName>
</protein>
<sequence length="252" mass="25263">MAKFALGHHREASDAGCVRAVLAELILTFLFVFAGVGSAMATGKLAGGGGDTVVGLTAVALAHTLVVAVMVSAGLHVSGGHINPAVTLGLAATGRITLFRSALYVAAQLLGSTLACLLLAFLAVADSGVPVHALGAGVGALRGVLMEAVLTFSLLFAVYATVVDPRRAVGGMGPLLVGLVVGANVLAGGPFSGASMNPARSFGPALVAGVWADHWVYWVGPLIGGPLAGLVYDGLFMAQGGHEPLPRDDTDF</sequence>
<gene>
    <name type="primary">TIP4-4</name>
</gene>
<proteinExistence type="evidence at transcript level"/>
<accession>Q9ATL3</accession>
<feature type="chain" id="PRO_0000286011" description="Aquaporin TIP4-4">
    <location>
        <begin position="1"/>
        <end position="252"/>
    </location>
</feature>
<feature type="transmembrane region" description="Helical; Name=1" evidence="2">
    <location>
        <begin position="20"/>
        <end position="40"/>
    </location>
</feature>
<feature type="transmembrane region" description="Helical; Name=2" evidence="2">
    <location>
        <begin position="53"/>
        <end position="73"/>
    </location>
</feature>
<feature type="transmembrane region" description="Helical; Name=3" evidence="2">
    <location>
        <begin position="105"/>
        <end position="125"/>
    </location>
</feature>
<feature type="transmembrane region" description="Helical; Name=4" evidence="2">
    <location>
        <begin position="143"/>
        <end position="163"/>
    </location>
</feature>
<feature type="transmembrane region" description="Helical; Name=5" evidence="2">
    <location>
        <begin position="168"/>
        <end position="188"/>
    </location>
</feature>
<feature type="transmembrane region" description="Helical; Name=6" evidence="2">
    <location>
        <begin position="216"/>
        <end position="236"/>
    </location>
</feature>
<feature type="short sequence motif" description="NPA 1" evidence="1">
    <location>
        <begin position="83"/>
        <end position="85"/>
    </location>
</feature>
<feature type="short sequence motif" description="NPA 2" evidence="1">
    <location>
        <begin position="197"/>
        <end position="199"/>
    </location>
</feature>
<name>TIP44_MAIZE</name>
<keyword id="KW-0472">Membrane</keyword>
<keyword id="KW-1185">Reference proteome</keyword>
<keyword id="KW-0677">Repeat</keyword>
<keyword id="KW-0812">Transmembrane</keyword>
<keyword id="KW-1133">Transmembrane helix</keyword>
<keyword id="KW-0813">Transport</keyword>
<keyword id="KW-0926">Vacuole</keyword>
<comment type="function">
    <text evidence="1">Aquaporins facilitate the transport of water and small neutral solutes across cell membranes.</text>
</comment>
<comment type="subcellular location">
    <subcellularLocation>
        <location evidence="1">Vacuole membrane</location>
        <topology evidence="1">Multi-pass membrane protein</topology>
    </subcellularLocation>
    <text>Tonoplast.</text>
</comment>
<comment type="domain">
    <text>Aquaporins contain two tandem repeats each containing three membrane-spanning domains and a pore-forming loop with the signature motif Asn-Pro-Ala (NPA).</text>
</comment>
<comment type="similarity">
    <text evidence="3">Belongs to the MIP/aquaporin (TC 1.A.8) family. TIP (TC 1.A.8.10) subfamily.</text>
</comment>
<evidence type="ECO:0000250" key="1"/>
<evidence type="ECO:0000255" key="2"/>
<evidence type="ECO:0000305" key="3"/>
<dbReference type="EMBL" id="AF326508">
    <property type="protein sequence ID" value="AAK26775.1"/>
    <property type="molecule type" value="mRNA"/>
</dbReference>
<dbReference type="RefSeq" id="NP_001105641.1">
    <property type="nucleotide sequence ID" value="NM_001112171.1"/>
</dbReference>
<dbReference type="SMR" id="Q9ATL3"/>
<dbReference type="FunCoup" id="Q9ATL3">
    <property type="interactions" value="964"/>
</dbReference>
<dbReference type="STRING" id="4577.Q9ATL3"/>
<dbReference type="PaxDb" id="4577-GRMZM2G093090_P01"/>
<dbReference type="EnsemblPlants" id="Zm00001eb119200_T001">
    <property type="protein sequence ID" value="Zm00001eb119200_P001"/>
    <property type="gene ID" value="Zm00001eb119200"/>
</dbReference>
<dbReference type="GeneID" id="542647"/>
<dbReference type="Gramene" id="Zm00001eb119200_T001">
    <property type="protein sequence ID" value="Zm00001eb119200_P001"/>
    <property type="gene ID" value="Zm00001eb119200"/>
</dbReference>
<dbReference type="KEGG" id="zma:542647"/>
<dbReference type="eggNOG" id="KOG0223">
    <property type="taxonomic scope" value="Eukaryota"/>
</dbReference>
<dbReference type="InParanoid" id="Q9ATL3"/>
<dbReference type="OrthoDB" id="3222at2759"/>
<dbReference type="Proteomes" id="UP000007305">
    <property type="component" value="Chromosome 3"/>
</dbReference>
<dbReference type="ExpressionAtlas" id="Q9ATL3">
    <property type="expression patterns" value="baseline and differential"/>
</dbReference>
<dbReference type="GO" id="GO:0016020">
    <property type="term" value="C:membrane"/>
    <property type="evidence" value="ECO:0000318"/>
    <property type="project" value="GO_Central"/>
</dbReference>
<dbReference type="GO" id="GO:0005774">
    <property type="term" value="C:vacuolar membrane"/>
    <property type="evidence" value="ECO:0007669"/>
    <property type="project" value="UniProtKB-SubCell"/>
</dbReference>
<dbReference type="GO" id="GO:0015250">
    <property type="term" value="F:water channel activity"/>
    <property type="evidence" value="ECO:0000318"/>
    <property type="project" value="GO_Central"/>
</dbReference>
<dbReference type="GO" id="GO:0015840">
    <property type="term" value="P:urea transport"/>
    <property type="evidence" value="ECO:0000315"/>
    <property type="project" value="CACAO"/>
</dbReference>
<dbReference type="GO" id="GO:0006833">
    <property type="term" value="P:water transport"/>
    <property type="evidence" value="ECO:0000318"/>
    <property type="project" value="GO_Central"/>
</dbReference>
<dbReference type="CDD" id="cd00333">
    <property type="entry name" value="MIP"/>
    <property type="match status" value="1"/>
</dbReference>
<dbReference type="FunFam" id="1.20.1080.10:FF:000002">
    <property type="entry name" value="Probable aquaporin TIP1-1"/>
    <property type="match status" value="1"/>
</dbReference>
<dbReference type="Gene3D" id="1.20.1080.10">
    <property type="entry name" value="Glycerol uptake facilitator protein"/>
    <property type="match status" value="1"/>
</dbReference>
<dbReference type="InterPro" id="IPR023271">
    <property type="entry name" value="Aquaporin-like"/>
</dbReference>
<dbReference type="InterPro" id="IPR034294">
    <property type="entry name" value="Aquaporin_transptr"/>
</dbReference>
<dbReference type="InterPro" id="IPR000425">
    <property type="entry name" value="MIP"/>
</dbReference>
<dbReference type="InterPro" id="IPR022357">
    <property type="entry name" value="MIP_CS"/>
</dbReference>
<dbReference type="PANTHER" id="PTHR45665:SF26">
    <property type="entry name" value="AQUAPORIN TIP4-1"/>
    <property type="match status" value="1"/>
</dbReference>
<dbReference type="PANTHER" id="PTHR45665">
    <property type="entry name" value="AQUAPORIN-8"/>
    <property type="match status" value="1"/>
</dbReference>
<dbReference type="Pfam" id="PF00230">
    <property type="entry name" value="MIP"/>
    <property type="match status" value="1"/>
</dbReference>
<dbReference type="PRINTS" id="PR00783">
    <property type="entry name" value="MINTRINSICP"/>
</dbReference>
<dbReference type="SUPFAM" id="SSF81338">
    <property type="entry name" value="Aquaporin-like"/>
    <property type="match status" value="1"/>
</dbReference>
<dbReference type="PROSITE" id="PS00221">
    <property type="entry name" value="MIP"/>
    <property type="match status" value="1"/>
</dbReference>